<accession>Q54SP5</accession>
<keyword id="KW-1185">Reference proteome</keyword>
<gene>
    <name type="primary">hssl58</name>
    <name type="ORF">DDB_G0282323</name>
</gene>
<proteinExistence type="inferred from homology"/>
<reference key="1">
    <citation type="journal article" date="2005" name="Nature">
        <title>The genome of the social amoeba Dictyostelium discoideum.</title>
        <authorList>
            <person name="Eichinger L."/>
            <person name="Pachebat J.A."/>
            <person name="Gloeckner G."/>
            <person name="Rajandream M.A."/>
            <person name="Sucgang R."/>
            <person name="Berriman M."/>
            <person name="Song J."/>
            <person name="Olsen R."/>
            <person name="Szafranski K."/>
            <person name="Xu Q."/>
            <person name="Tunggal B."/>
            <person name="Kummerfeld S."/>
            <person name="Madera M."/>
            <person name="Konfortov B.A."/>
            <person name="Rivero F."/>
            <person name="Bankier A.T."/>
            <person name="Lehmann R."/>
            <person name="Hamlin N."/>
            <person name="Davies R."/>
            <person name="Gaudet P."/>
            <person name="Fey P."/>
            <person name="Pilcher K."/>
            <person name="Chen G."/>
            <person name="Saunders D."/>
            <person name="Sodergren E.J."/>
            <person name="Davis P."/>
            <person name="Kerhornou A."/>
            <person name="Nie X."/>
            <person name="Hall N."/>
            <person name="Anjard C."/>
            <person name="Hemphill L."/>
            <person name="Bason N."/>
            <person name="Farbrother P."/>
            <person name="Desany B."/>
            <person name="Just E."/>
            <person name="Morio T."/>
            <person name="Rost R."/>
            <person name="Churcher C.M."/>
            <person name="Cooper J."/>
            <person name="Haydock S."/>
            <person name="van Driessche N."/>
            <person name="Cronin A."/>
            <person name="Goodhead I."/>
            <person name="Muzny D.M."/>
            <person name="Mourier T."/>
            <person name="Pain A."/>
            <person name="Lu M."/>
            <person name="Harper D."/>
            <person name="Lindsay R."/>
            <person name="Hauser H."/>
            <person name="James K.D."/>
            <person name="Quiles M."/>
            <person name="Madan Babu M."/>
            <person name="Saito T."/>
            <person name="Buchrieser C."/>
            <person name="Wardroper A."/>
            <person name="Felder M."/>
            <person name="Thangavelu M."/>
            <person name="Johnson D."/>
            <person name="Knights A."/>
            <person name="Loulseged H."/>
            <person name="Mungall K.L."/>
            <person name="Oliver K."/>
            <person name="Price C."/>
            <person name="Quail M.A."/>
            <person name="Urushihara H."/>
            <person name="Hernandez J."/>
            <person name="Rabbinowitsch E."/>
            <person name="Steffen D."/>
            <person name="Sanders M."/>
            <person name="Ma J."/>
            <person name="Kohara Y."/>
            <person name="Sharp S."/>
            <person name="Simmonds M.N."/>
            <person name="Spiegler S."/>
            <person name="Tivey A."/>
            <person name="Sugano S."/>
            <person name="White B."/>
            <person name="Walker D."/>
            <person name="Woodward J.R."/>
            <person name="Winckler T."/>
            <person name="Tanaka Y."/>
            <person name="Shaulsky G."/>
            <person name="Schleicher M."/>
            <person name="Weinstock G.M."/>
            <person name="Rosenthal A."/>
            <person name="Cox E.C."/>
            <person name="Chisholm R.L."/>
            <person name="Gibbs R.A."/>
            <person name="Loomis W.F."/>
            <person name="Platzer M."/>
            <person name="Kay R.R."/>
            <person name="Williams J.G."/>
            <person name="Dear P.H."/>
            <person name="Noegel A.A."/>
            <person name="Barrell B.G."/>
            <person name="Kuspa A."/>
        </authorList>
    </citation>
    <scope>NUCLEOTIDE SEQUENCE [LARGE SCALE GENOMIC DNA]</scope>
    <source>
        <strain>AX4</strain>
    </source>
</reference>
<sequence>MTILSAITSISRPNKSSKSVISSNGGSSLSMGSNSVSCFNACGGGSSYSYSSSYSGSGLDYSYKANYSSSTGYNSSVIIASSTCHCS</sequence>
<name>HSL58_DICDI</name>
<protein>
    <recommendedName>
        <fullName>HssA/B-like protein 58</fullName>
    </recommendedName>
</protein>
<evidence type="ECO:0000256" key="1">
    <source>
        <dbReference type="SAM" id="MobiDB-lite"/>
    </source>
</evidence>
<evidence type="ECO:0000305" key="2"/>
<comment type="similarity">
    <text evidence="2">Belongs to the hssA/B family.</text>
</comment>
<feature type="chain" id="PRO_0000330426" description="HssA/B-like protein 58">
    <location>
        <begin position="1"/>
        <end position="87"/>
    </location>
</feature>
<feature type="region of interest" description="Disordered" evidence="1">
    <location>
        <begin position="1"/>
        <end position="31"/>
    </location>
</feature>
<feature type="compositionally biased region" description="Polar residues" evidence="1">
    <location>
        <begin position="1"/>
        <end position="13"/>
    </location>
</feature>
<feature type="compositionally biased region" description="Low complexity" evidence="1">
    <location>
        <begin position="14"/>
        <end position="31"/>
    </location>
</feature>
<organism>
    <name type="scientific">Dictyostelium discoideum</name>
    <name type="common">Social amoeba</name>
    <dbReference type="NCBI Taxonomy" id="44689"/>
    <lineage>
        <taxon>Eukaryota</taxon>
        <taxon>Amoebozoa</taxon>
        <taxon>Evosea</taxon>
        <taxon>Eumycetozoa</taxon>
        <taxon>Dictyostelia</taxon>
        <taxon>Dictyosteliales</taxon>
        <taxon>Dictyosteliaceae</taxon>
        <taxon>Dictyostelium</taxon>
    </lineage>
</organism>
<dbReference type="EMBL" id="AAFI02000047">
    <property type="protein sequence ID" value="EAL66283.1"/>
    <property type="molecule type" value="Genomic_DNA"/>
</dbReference>
<dbReference type="RefSeq" id="XP_640256.1">
    <property type="nucleotide sequence ID" value="XM_635164.1"/>
</dbReference>
<dbReference type="FunCoup" id="Q54SP5">
    <property type="interactions" value="243"/>
</dbReference>
<dbReference type="PaxDb" id="44689-DDB0252801"/>
<dbReference type="EnsemblProtists" id="EAL66283">
    <property type="protein sequence ID" value="EAL66283"/>
    <property type="gene ID" value="DDB_G0282323"/>
</dbReference>
<dbReference type="GeneID" id="8623515"/>
<dbReference type="KEGG" id="ddi:DDB_G0282323"/>
<dbReference type="dictyBase" id="DDB_G0282323"/>
<dbReference type="VEuPathDB" id="AmoebaDB:DDB_G0282319"/>
<dbReference type="HOGENOM" id="CLU_181850_1_0_1"/>
<dbReference type="InParanoid" id="Q54SP5"/>
<dbReference type="PhylomeDB" id="Q54SP5"/>
<dbReference type="PRO" id="PR:Q54SP5"/>
<dbReference type="Proteomes" id="UP000002195">
    <property type="component" value="Chromosome 3"/>
</dbReference>
<dbReference type="GO" id="GO:0030587">
    <property type="term" value="P:sorocarp development"/>
    <property type="evidence" value="ECO:0000318"/>
    <property type="project" value="GO_Central"/>
</dbReference>
<dbReference type="InterPro" id="IPR050533">
    <property type="entry name" value="HssA/B-like_chaperone"/>
</dbReference>
<dbReference type="InterPro" id="IPR008455">
    <property type="entry name" value="HssA/B-related"/>
</dbReference>
<dbReference type="PANTHER" id="PTHR31059">
    <property type="entry name" value="HSSA/B-LIKE PROTEIN 1-RELATED-RELATED"/>
    <property type="match status" value="1"/>
</dbReference>
<dbReference type="PANTHER" id="PTHR31059:SF5">
    <property type="entry name" value="HSSA_B-LIKE PROTEIN 1-RELATED"/>
    <property type="match status" value="1"/>
</dbReference>
<dbReference type="Pfam" id="PF05710">
    <property type="entry name" value="Coiled"/>
    <property type="match status" value="1"/>
</dbReference>